<comment type="function">
    <text evidence="1">Regulation of oxygen dependent gene expression. It modulates the expression of Iso-1 (CYP1) and Iso-2 (CYP3) cytochrome c. In response to heme, promotes transcription of genes encoding functions required for respiration, controlling oxidative damage and repression of anaerobic genes. Binds to the sequence 5'-CGGNNNTNNCGG-3' (By similarity).</text>
</comment>
<comment type="subunit">
    <text evidence="1">Binds DNA as a homodimer. Interacts with SRO9 and YDJ1. In the absence of heme, binds to at least four cellular proteins, including YDJ1 and SRO9, forming a high-molecular-weight complex (HMC) which results in repression of its activity and dictates its DNA-binding specificity (By similarity).</text>
</comment>
<comment type="subcellular location">
    <subcellularLocation>
        <location evidence="3">Nucleus</location>
    </subcellularLocation>
</comment>
<comment type="miscellaneous">
    <text evidence="1">Heme is an effector molecule for CYP1/HAP1. The repeat region (see FT table) mediates heme induction by masking the DNA-binding domain in the absence of inducer (By similarity).</text>
</comment>
<keyword id="KW-0010">Activator</keyword>
<keyword id="KW-0175">Coiled coil</keyword>
<keyword id="KW-0238">DNA-binding</keyword>
<keyword id="KW-0349">Heme</keyword>
<keyword id="KW-0408">Iron</keyword>
<keyword id="KW-0479">Metal-binding</keyword>
<keyword id="KW-0539">Nucleus</keyword>
<keyword id="KW-0677">Repeat</keyword>
<keyword id="KW-0804">Transcription</keyword>
<keyword id="KW-0805">Transcription regulation</keyword>
<keyword id="KW-0862">Zinc</keyword>
<organism>
    <name type="scientific">Saccharomyces cerevisiae (strain RM11-1a)</name>
    <name type="common">Baker's yeast</name>
    <dbReference type="NCBI Taxonomy" id="285006"/>
    <lineage>
        <taxon>Eukaryota</taxon>
        <taxon>Fungi</taxon>
        <taxon>Dikarya</taxon>
        <taxon>Ascomycota</taxon>
        <taxon>Saccharomycotina</taxon>
        <taxon>Saccharomycetes</taxon>
        <taxon>Saccharomycetales</taxon>
        <taxon>Saccharomycetaceae</taxon>
        <taxon>Saccharomyces</taxon>
    </lineage>
</organism>
<proteinExistence type="inferred from homology"/>
<gene>
    <name type="primary">HAP1</name>
    <name type="synonym">CYP1</name>
    <name type="ORF">SCRG_04207</name>
</gene>
<accession>B3RHD9</accession>
<reference key="1">
    <citation type="submission" date="2005-03" db="EMBL/GenBank/DDBJ databases">
        <title>Annotation of the Saccharomyces cerevisiae RM11-1a genome.</title>
        <authorList>
            <consortium name="The Broad Institute Genome Sequencing Platform"/>
            <person name="Birren B.W."/>
            <person name="Lander E.S."/>
            <person name="Galagan J.E."/>
            <person name="Nusbaum C."/>
            <person name="Devon K."/>
            <person name="Cuomo C."/>
            <person name="Jaffe D.B."/>
            <person name="Butler J."/>
            <person name="Alvarez P."/>
            <person name="Gnerre S."/>
            <person name="Grabherr M."/>
            <person name="Kleber M."/>
            <person name="Mauceli E.W."/>
            <person name="Brockman W."/>
            <person name="MacCallum I.A."/>
            <person name="Rounsley S."/>
            <person name="Young S.K."/>
            <person name="LaButti K."/>
            <person name="Pushparaj V."/>
            <person name="DeCaprio D."/>
            <person name="Crawford M."/>
            <person name="Koehrsen M."/>
            <person name="Engels R."/>
            <person name="Montgomery P."/>
            <person name="Pearson M."/>
            <person name="Howarth C."/>
            <person name="Larson L."/>
            <person name="Luoma S."/>
            <person name="White J."/>
            <person name="O'Leary S."/>
            <person name="Kodira C.D."/>
            <person name="Zeng Q."/>
            <person name="Yandava C."/>
            <person name="Alvarado L."/>
            <person name="Pratt S."/>
            <person name="Kruglyak L."/>
        </authorList>
    </citation>
    <scope>NUCLEOTIDE SEQUENCE [LARGE SCALE GENOMIC DNA]</scope>
    <source>
        <strain>RM11-1a</strain>
    </source>
</reference>
<dbReference type="EMBL" id="DS981519">
    <property type="protein sequence ID" value="EDV08583.1"/>
    <property type="molecule type" value="Genomic_DNA"/>
</dbReference>
<dbReference type="SMR" id="B3RHD9"/>
<dbReference type="HOGENOM" id="CLU_004380_0_0_1"/>
<dbReference type="OrthoDB" id="40778at4893"/>
<dbReference type="Proteomes" id="UP000008335">
    <property type="component" value="Unassembled WGS sequence"/>
</dbReference>
<dbReference type="GO" id="GO:0005634">
    <property type="term" value="C:nucleus"/>
    <property type="evidence" value="ECO:0007669"/>
    <property type="project" value="UniProtKB-SubCell"/>
</dbReference>
<dbReference type="GO" id="GO:0001228">
    <property type="term" value="F:DNA-binding transcription activator activity, RNA polymerase II-specific"/>
    <property type="evidence" value="ECO:0007669"/>
    <property type="project" value="TreeGrafter"/>
</dbReference>
<dbReference type="GO" id="GO:0000978">
    <property type="term" value="F:RNA polymerase II cis-regulatory region sequence-specific DNA binding"/>
    <property type="evidence" value="ECO:0007669"/>
    <property type="project" value="TreeGrafter"/>
</dbReference>
<dbReference type="GO" id="GO:0008270">
    <property type="term" value="F:zinc ion binding"/>
    <property type="evidence" value="ECO:0007669"/>
    <property type="project" value="InterPro"/>
</dbReference>
<dbReference type="GO" id="GO:0006351">
    <property type="term" value="P:DNA-templated transcription"/>
    <property type="evidence" value="ECO:0007669"/>
    <property type="project" value="InterPro"/>
</dbReference>
<dbReference type="CDD" id="cd12148">
    <property type="entry name" value="fungal_TF_MHR"/>
    <property type="match status" value="1"/>
</dbReference>
<dbReference type="CDD" id="cd00067">
    <property type="entry name" value="GAL4"/>
    <property type="match status" value="1"/>
</dbReference>
<dbReference type="CDD" id="cd14655">
    <property type="entry name" value="ZIP_Hap1"/>
    <property type="match status" value="1"/>
</dbReference>
<dbReference type="FunFam" id="4.10.240.10:FF:000014">
    <property type="entry name" value="HAP1p Zinc finger transcription factor"/>
    <property type="match status" value="1"/>
</dbReference>
<dbReference type="Gene3D" id="1.20.5.170">
    <property type="match status" value="1"/>
</dbReference>
<dbReference type="Gene3D" id="4.10.240.10">
    <property type="entry name" value="Zn(2)-C6 fungal-type DNA-binding domain"/>
    <property type="match status" value="1"/>
</dbReference>
<dbReference type="InterPro" id="IPR046347">
    <property type="entry name" value="bZIP_sf"/>
</dbReference>
<dbReference type="InterPro" id="IPR051430">
    <property type="entry name" value="Fungal_TF_Env_Response"/>
</dbReference>
<dbReference type="InterPro" id="IPR007219">
    <property type="entry name" value="Transcription_factor_dom_fun"/>
</dbReference>
<dbReference type="InterPro" id="IPR036864">
    <property type="entry name" value="Zn2-C6_fun-type_DNA-bd_sf"/>
</dbReference>
<dbReference type="InterPro" id="IPR001138">
    <property type="entry name" value="Zn2Cys6_DnaBD"/>
</dbReference>
<dbReference type="PANTHER" id="PTHR31944">
    <property type="entry name" value="HEME-RESPONSIVE ZINC FINGER TRANSCRIPTION FACTOR HAP1"/>
    <property type="match status" value="1"/>
</dbReference>
<dbReference type="PANTHER" id="PTHR31944:SF131">
    <property type="entry name" value="HEME-RESPONSIVE ZINC FINGER TRANSCRIPTION FACTOR HAP1"/>
    <property type="match status" value="1"/>
</dbReference>
<dbReference type="Pfam" id="PF00172">
    <property type="entry name" value="Zn_clus"/>
    <property type="match status" value="1"/>
</dbReference>
<dbReference type="SMART" id="SM00906">
    <property type="entry name" value="Fungal_trans"/>
    <property type="match status" value="1"/>
</dbReference>
<dbReference type="SMART" id="SM00066">
    <property type="entry name" value="GAL4"/>
    <property type="match status" value="1"/>
</dbReference>
<dbReference type="SUPFAM" id="SSF57959">
    <property type="entry name" value="Leucine zipper domain"/>
    <property type="match status" value="1"/>
</dbReference>
<dbReference type="SUPFAM" id="SSF57701">
    <property type="entry name" value="Zn2/Cys6 DNA-binding domain"/>
    <property type="match status" value="1"/>
</dbReference>
<dbReference type="PROSITE" id="PS00463">
    <property type="entry name" value="ZN2_CY6_FUNGAL_1"/>
    <property type="match status" value="1"/>
</dbReference>
<dbReference type="PROSITE" id="PS50048">
    <property type="entry name" value="ZN2_CY6_FUNGAL_2"/>
    <property type="match status" value="1"/>
</dbReference>
<feature type="chain" id="PRO_0000392059" description="Heme-responsive zinc finger transcription factor HAP1">
    <location>
        <begin position="1"/>
        <end position="1483"/>
    </location>
</feature>
<feature type="repeat" description="HRM 1">
    <location>
        <begin position="280"/>
        <end position="285"/>
    </location>
</feature>
<feature type="repeat" description="HRM 2">
    <location>
        <begin position="299"/>
        <end position="304"/>
    </location>
</feature>
<feature type="repeat" description="HRM 3">
    <location>
        <begin position="323"/>
        <end position="328"/>
    </location>
</feature>
<feature type="repeat" description="HRM 4">
    <location>
        <begin position="347"/>
        <end position="352"/>
    </location>
</feature>
<feature type="repeat" description="HRM 5">
    <location>
        <begin position="389"/>
        <end position="394"/>
    </location>
</feature>
<feature type="repeat" description="HRM 6">
    <location>
        <begin position="415"/>
        <end position="420"/>
    </location>
</feature>
<feature type="repeat" description="HRM 7">
    <location>
        <begin position="1192"/>
        <end position="1197"/>
    </location>
</feature>
<feature type="DNA-binding region" description="Zn(2)-C6 fungal-type" evidence="3">
    <location>
        <begin position="64"/>
        <end position="93"/>
    </location>
</feature>
<feature type="region of interest" description="Disordered" evidence="4">
    <location>
        <begin position="1"/>
        <end position="56"/>
    </location>
</feature>
<feature type="region of interest" description="Disordered" evidence="4">
    <location>
        <begin position="162"/>
        <end position="208"/>
    </location>
</feature>
<feature type="region of interest" description="Heme-responsive; required for HMC formation" evidence="1">
    <location>
        <begin position="244"/>
        <end position="444"/>
    </location>
</feature>
<feature type="region of interest" description="Disordered" evidence="4">
    <location>
        <begin position="432"/>
        <end position="458"/>
    </location>
</feature>
<feature type="region of interest" description="Disordered" evidence="4">
    <location>
        <begin position="706"/>
        <end position="767"/>
    </location>
</feature>
<feature type="region of interest" description="Disordered" evidence="4">
    <location>
        <begin position="1384"/>
        <end position="1411"/>
    </location>
</feature>
<feature type="coiled-coil region" evidence="2">
    <location>
        <begin position="105"/>
        <end position="134"/>
    </location>
</feature>
<feature type="compositionally biased region" description="Polar residues" evidence="4">
    <location>
        <begin position="1"/>
        <end position="50"/>
    </location>
</feature>
<feature type="compositionally biased region" description="Polar residues" evidence="4">
    <location>
        <begin position="162"/>
        <end position="176"/>
    </location>
</feature>
<feature type="compositionally biased region" description="Low complexity" evidence="4">
    <location>
        <begin position="177"/>
        <end position="208"/>
    </location>
</feature>
<feature type="compositionally biased region" description="Polar residues" evidence="4">
    <location>
        <begin position="432"/>
        <end position="447"/>
    </location>
</feature>
<feature type="compositionally biased region" description="Polar residues" evidence="4">
    <location>
        <begin position="706"/>
        <end position="734"/>
    </location>
</feature>
<feature type="compositionally biased region" description="Low complexity" evidence="4">
    <location>
        <begin position="735"/>
        <end position="759"/>
    </location>
</feature>
<feature type="compositionally biased region" description="Polar residues" evidence="4">
    <location>
        <begin position="1388"/>
        <end position="1411"/>
    </location>
</feature>
<feature type="binding site" evidence="1">
    <location>
        <position position="64"/>
    </location>
    <ligand>
        <name>Zn(2+)</name>
        <dbReference type="ChEBI" id="CHEBI:29105"/>
        <label>1</label>
    </ligand>
</feature>
<feature type="binding site" evidence="1">
    <location>
        <position position="64"/>
    </location>
    <ligand>
        <name>Zn(2+)</name>
        <dbReference type="ChEBI" id="CHEBI:29105"/>
        <label>2</label>
    </ligand>
</feature>
<feature type="binding site" evidence="1">
    <location>
        <position position="67"/>
    </location>
    <ligand>
        <name>Zn(2+)</name>
        <dbReference type="ChEBI" id="CHEBI:29105"/>
        <label>1</label>
    </ligand>
</feature>
<feature type="binding site" evidence="1">
    <location>
        <position position="74"/>
    </location>
    <ligand>
        <name>Zn(2+)</name>
        <dbReference type="ChEBI" id="CHEBI:29105"/>
        <label>1</label>
    </ligand>
</feature>
<feature type="binding site" evidence="1">
    <location>
        <position position="81"/>
    </location>
    <ligand>
        <name>Zn(2+)</name>
        <dbReference type="ChEBI" id="CHEBI:29105"/>
        <label>1</label>
    </ligand>
</feature>
<feature type="binding site" evidence="1">
    <location>
        <position position="81"/>
    </location>
    <ligand>
        <name>Zn(2+)</name>
        <dbReference type="ChEBI" id="CHEBI:29105"/>
        <label>2</label>
    </ligand>
</feature>
<feature type="binding site" evidence="1">
    <location>
        <position position="84"/>
    </location>
    <ligand>
        <name>Zn(2+)</name>
        <dbReference type="ChEBI" id="CHEBI:29105"/>
        <label>2</label>
    </ligand>
</feature>
<feature type="binding site" evidence="1">
    <location>
        <position position="93"/>
    </location>
    <ligand>
        <name>Zn(2+)</name>
        <dbReference type="ChEBI" id="CHEBI:29105"/>
        <label>2</label>
    </ligand>
</feature>
<sequence>MSNTPYNSSVPSIASMTQSSVSRSPNMHTATTPGANTSSNSPPLHMSSDSSKIKRKRNRIPLSCTICRKRKVKCDKLRPHCQQCTKTGVAHLCHYMEQTWAEEAEKELLKDNELKKLRERVKSLEKTLSKVHSSPSSNSLKSYNIPESSNLFMGSDEHTTLVNANTGSASSASHMHQQQQQQQQQEQQQDFSRSANANANSSSLSISNKYDNDELDLTKDFDLLHIKSNGTIHLGATHWLSIMKGDPYLKLLWGHIFAMREKLNEWYYQKNSYSKLKSSKCPINHAQAPPSAAAAATRKCPVDHSAFSSGMVAPKEETPLPRKCPVDHTMFSSGMIPPREDTSSQKRCPVDHTMYSAGMMPPKDETPSPFSTKAMIDHNKHTMNPPQSKCPVDHRNYMKDYPSDMANSSSNPASRCPIDHSSMKNTAALPASTHNTIPHHQPQSGSHARSHPAQNRKHDSYMTESEVLATLCEMLPPKRVIALFIEKFFKHLYPAIPILDEQNFKNHMNQMLSLSSMNPTVNNFGMSMPSSSTLENQPITQINLPKLSDSCNLGILIIILRLTWLSIPSNSCEVDLGEESGSFLVPNESSNMSASALTSMAKEESLLLKHETPVEALELCQKYLIKFDELSSISNNNVNLTTVQFAIFYNFYMKSASNDLTTLTNTNNTGMANPGHDSESHQILLSNITQMAFSCGLHRDPDNFPQLNATIPATSQDVSNNGSKKANPSTNPTLNNNMSAATTNSSSRSGSADSRSGSNPVNKKENQVSIERFKHTWRKIWYYIVSMDVNQSLSLGSPRLLRNLRDFSDTKLPSASRIDYVRDIKELIIVKNFTLFFQIDLCIIAVLNHILNVSLARSVRKFELDSLINLLKNLTYGTENVNDVVSSLINKGLLPTSEGGSVDSNNDEIYGLPKLPDILNHGQHNQNLYADGRNTSSSDIDKKLDLPHESTTRALFFSKHMTIRMLLYLLNYILFTHYEPMGSEDPGTNILAKEYAQEALNFAMDGYRNCMIFFNNIRNTNSLFDYMNVILSYPCLDIGHRSLQFIVCLILRAKCGPLTGMRESSIITNGTSSGFNSSVEDEDVKVKQESSDELKKDDFMKDVNLDSGDSLAEILMSRMLLFQKLTKQLSKKYNYAIRMNKSTGFFVSLLDTPSKKSDSKSGGSSFMLGNWKHPKVSNMSGFLAGDKDQLQKCPVYQDALGFVSPTGANEGSAPMQGMSLQGSTARMGGTQLPPIRSYKPITYTSSNLRRMNETGEAEAKRRRFNDGYIDNNSNNDIPRGISPKPSNGLSSVQPLLSSFSMNQLNGGTIPTVPSLTNITSQMGALPSLDRITTNQINLPDPSRDEAFDNSIKQMTPMTSAFMNANTTIPSSTLNGNMNMNGAGTANTDTSANGSALSTLTSPQGSDLASNSATQYKPDLEDFLMQNSNFNGLMINPSSLVEVVGGYNDPNNLGRNDAVDFLPVDNVEIDGLVDFYRADFPIWE</sequence>
<evidence type="ECO:0000250" key="1"/>
<evidence type="ECO:0000255" key="2"/>
<evidence type="ECO:0000255" key="3">
    <source>
        <dbReference type="PROSITE-ProRule" id="PRU00227"/>
    </source>
</evidence>
<evidence type="ECO:0000256" key="4">
    <source>
        <dbReference type="SAM" id="MobiDB-lite"/>
    </source>
</evidence>
<protein>
    <recommendedName>
        <fullName>Heme-responsive zinc finger transcription factor HAP1</fullName>
    </recommendedName>
    <alternativeName>
        <fullName>CYP1 activatory protein</fullName>
    </alternativeName>
    <alternativeName>
        <fullName>Heme activator protein 1</fullName>
    </alternativeName>
</protein>
<name>HAP1_YEAS1</name>